<reference key="1">
    <citation type="journal article" date="2009" name="Infect. Immun.">
        <title>Comparative genomics reveal extensive transposon-mediated genomic plasticity and diversity among potential effector proteins within the genus Coxiella.</title>
        <authorList>
            <person name="Beare P.A."/>
            <person name="Unsworth N."/>
            <person name="Andoh M."/>
            <person name="Voth D.E."/>
            <person name="Omsland A."/>
            <person name="Gilk S.D."/>
            <person name="Williams K.P."/>
            <person name="Sobral B.W."/>
            <person name="Kupko J.J. III"/>
            <person name="Porcella S.F."/>
            <person name="Samuel J.E."/>
            <person name="Heinzen R.A."/>
        </authorList>
    </citation>
    <scope>NUCLEOTIDE SEQUENCE [LARGE SCALE GENOMIC DNA]</scope>
    <source>
        <strain>CbuG_Q212</strain>
    </source>
</reference>
<organism>
    <name type="scientific">Coxiella burnetii (strain CbuG_Q212)</name>
    <name type="common">Coxiella burnetii (strain Q212)</name>
    <dbReference type="NCBI Taxonomy" id="434923"/>
    <lineage>
        <taxon>Bacteria</taxon>
        <taxon>Pseudomonadati</taxon>
        <taxon>Pseudomonadota</taxon>
        <taxon>Gammaproteobacteria</taxon>
        <taxon>Legionellales</taxon>
        <taxon>Coxiellaceae</taxon>
        <taxon>Coxiella</taxon>
    </lineage>
</organism>
<accession>B6J130</accession>
<protein>
    <recommendedName>
        <fullName evidence="1">Nucleoid-associated protein CbuG_1351</fullName>
    </recommendedName>
</protein>
<evidence type="ECO:0000255" key="1">
    <source>
        <dbReference type="HAMAP-Rule" id="MF_00274"/>
    </source>
</evidence>
<gene>
    <name type="ordered locus">CbuG_1351</name>
</gene>
<proteinExistence type="inferred from homology"/>
<sequence length="110" mass="12103">MIGGKFNLGSLMKNAKKIQEMMQKAQDELAKIRVTGESGAGMVKLTMTAQHEVVEMNLDDELLKESKEVIEDLIKAALNDANQKILKITQEKMMSAGSLFGGNESDNEET</sequence>
<dbReference type="EMBL" id="CP001019">
    <property type="protein sequence ID" value="ACJ18658.1"/>
    <property type="molecule type" value="Genomic_DNA"/>
</dbReference>
<dbReference type="RefSeq" id="WP_005771886.1">
    <property type="nucleotide sequence ID" value="NC_011527.1"/>
</dbReference>
<dbReference type="SMR" id="B6J130"/>
<dbReference type="KEGG" id="cbg:CbuG_1351"/>
<dbReference type="HOGENOM" id="CLU_140930_0_0_6"/>
<dbReference type="GO" id="GO:0043590">
    <property type="term" value="C:bacterial nucleoid"/>
    <property type="evidence" value="ECO:0007669"/>
    <property type="project" value="UniProtKB-UniRule"/>
</dbReference>
<dbReference type="GO" id="GO:0005829">
    <property type="term" value="C:cytosol"/>
    <property type="evidence" value="ECO:0007669"/>
    <property type="project" value="TreeGrafter"/>
</dbReference>
<dbReference type="GO" id="GO:0003677">
    <property type="term" value="F:DNA binding"/>
    <property type="evidence" value="ECO:0007669"/>
    <property type="project" value="UniProtKB-UniRule"/>
</dbReference>
<dbReference type="Gene3D" id="3.30.1310.10">
    <property type="entry name" value="Nucleoid-associated protein YbaB-like domain"/>
    <property type="match status" value="1"/>
</dbReference>
<dbReference type="HAMAP" id="MF_00274">
    <property type="entry name" value="DNA_YbaB_EbfC"/>
    <property type="match status" value="1"/>
</dbReference>
<dbReference type="InterPro" id="IPR036894">
    <property type="entry name" value="YbaB-like_sf"/>
</dbReference>
<dbReference type="InterPro" id="IPR004401">
    <property type="entry name" value="YbaB/EbfC"/>
</dbReference>
<dbReference type="NCBIfam" id="TIGR00103">
    <property type="entry name" value="DNA_YbaB_EbfC"/>
    <property type="match status" value="1"/>
</dbReference>
<dbReference type="PANTHER" id="PTHR33449">
    <property type="entry name" value="NUCLEOID-ASSOCIATED PROTEIN YBAB"/>
    <property type="match status" value="1"/>
</dbReference>
<dbReference type="PANTHER" id="PTHR33449:SF1">
    <property type="entry name" value="NUCLEOID-ASSOCIATED PROTEIN YBAB"/>
    <property type="match status" value="1"/>
</dbReference>
<dbReference type="Pfam" id="PF02575">
    <property type="entry name" value="YbaB_DNA_bd"/>
    <property type="match status" value="1"/>
</dbReference>
<dbReference type="PIRSF" id="PIRSF004555">
    <property type="entry name" value="UCP004555"/>
    <property type="match status" value="1"/>
</dbReference>
<dbReference type="SUPFAM" id="SSF82607">
    <property type="entry name" value="YbaB-like"/>
    <property type="match status" value="1"/>
</dbReference>
<comment type="function">
    <text evidence="1">Binds to DNA and alters its conformation. May be involved in regulation of gene expression, nucleoid organization and DNA protection.</text>
</comment>
<comment type="subunit">
    <text evidence="1">Homodimer.</text>
</comment>
<comment type="subcellular location">
    <subcellularLocation>
        <location evidence="1">Cytoplasm</location>
        <location evidence="1">Nucleoid</location>
    </subcellularLocation>
</comment>
<comment type="similarity">
    <text evidence="1">Belongs to the YbaB/EbfC family.</text>
</comment>
<name>Y1351_COXB2</name>
<feature type="chain" id="PRO_1000114608" description="Nucleoid-associated protein CbuG_1351">
    <location>
        <begin position="1"/>
        <end position="110"/>
    </location>
</feature>
<keyword id="KW-0963">Cytoplasm</keyword>
<keyword id="KW-0238">DNA-binding</keyword>